<organism>
    <name type="scientific">Shewanella baltica (strain OS223)</name>
    <dbReference type="NCBI Taxonomy" id="407976"/>
    <lineage>
        <taxon>Bacteria</taxon>
        <taxon>Pseudomonadati</taxon>
        <taxon>Pseudomonadota</taxon>
        <taxon>Gammaproteobacteria</taxon>
        <taxon>Alteromonadales</taxon>
        <taxon>Shewanellaceae</taxon>
        <taxon>Shewanella</taxon>
    </lineage>
</organism>
<evidence type="ECO:0000255" key="1">
    <source>
        <dbReference type="HAMAP-Rule" id="MF_00090"/>
    </source>
</evidence>
<reference key="1">
    <citation type="submission" date="2008-12" db="EMBL/GenBank/DDBJ databases">
        <title>Complete sequence of chromosome of Shewanella baltica OS223.</title>
        <authorList>
            <consortium name="US DOE Joint Genome Institute"/>
            <person name="Lucas S."/>
            <person name="Copeland A."/>
            <person name="Lapidus A."/>
            <person name="Glavina del Rio T."/>
            <person name="Dalin E."/>
            <person name="Tice H."/>
            <person name="Bruce D."/>
            <person name="Goodwin L."/>
            <person name="Pitluck S."/>
            <person name="Chertkov O."/>
            <person name="Meincke L."/>
            <person name="Brettin T."/>
            <person name="Detter J.C."/>
            <person name="Han C."/>
            <person name="Kuske C.R."/>
            <person name="Larimer F."/>
            <person name="Land M."/>
            <person name="Hauser L."/>
            <person name="Kyrpides N."/>
            <person name="Ovchinnikova G."/>
            <person name="Brettar I."/>
            <person name="Rodrigues J."/>
            <person name="Konstantinidis K."/>
            <person name="Tiedje J."/>
        </authorList>
    </citation>
    <scope>NUCLEOTIDE SEQUENCE [LARGE SCALE GENOMIC DNA]</scope>
    <source>
        <strain>OS223</strain>
    </source>
</reference>
<keyword id="KW-0963">Cytoplasm</keyword>
<keyword id="KW-0489">Methyltransferase</keyword>
<keyword id="KW-0949">S-adenosyl-L-methionine</keyword>
<keyword id="KW-0808">Transferase</keyword>
<comment type="function">
    <text evidence="1">Catalyzes the methyl esterification of L-isoaspartyl residues in peptides and proteins that result from spontaneous decomposition of normal L-aspartyl and L-asparaginyl residues. It plays a role in the repair and/or degradation of damaged proteins.</text>
</comment>
<comment type="catalytic activity">
    <reaction evidence="1">
        <text>[protein]-L-isoaspartate + S-adenosyl-L-methionine = [protein]-L-isoaspartate alpha-methyl ester + S-adenosyl-L-homocysteine</text>
        <dbReference type="Rhea" id="RHEA:12705"/>
        <dbReference type="Rhea" id="RHEA-COMP:12143"/>
        <dbReference type="Rhea" id="RHEA-COMP:12144"/>
        <dbReference type="ChEBI" id="CHEBI:57856"/>
        <dbReference type="ChEBI" id="CHEBI:59789"/>
        <dbReference type="ChEBI" id="CHEBI:90596"/>
        <dbReference type="ChEBI" id="CHEBI:90598"/>
        <dbReference type="EC" id="2.1.1.77"/>
    </reaction>
</comment>
<comment type="subcellular location">
    <subcellularLocation>
        <location evidence="1">Cytoplasm</location>
    </subcellularLocation>
</comment>
<comment type="similarity">
    <text evidence="1">Belongs to the methyltransferase superfamily. L-isoaspartyl/D-aspartyl protein methyltransferase family.</text>
</comment>
<gene>
    <name evidence="1" type="primary">pcm</name>
    <name type="ordered locus">Sbal223_1243</name>
</gene>
<proteinExistence type="inferred from homology"/>
<dbReference type="EC" id="2.1.1.77" evidence="1"/>
<dbReference type="EMBL" id="CP001252">
    <property type="protein sequence ID" value="ACK45753.1"/>
    <property type="molecule type" value="Genomic_DNA"/>
</dbReference>
<dbReference type="RefSeq" id="WP_006082610.1">
    <property type="nucleotide sequence ID" value="NC_011663.1"/>
</dbReference>
<dbReference type="SMR" id="B8E8T7"/>
<dbReference type="KEGG" id="sbp:Sbal223_1243"/>
<dbReference type="HOGENOM" id="CLU_055432_2_0_6"/>
<dbReference type="Proteomes" id="UP000002507">
    <property type="component" value="Chromosome"/>
</dbReference>
<dbReference type="GO" id="GO:0005737">
    <property type="term" value="C:cytoplasm"/>
    <property type="evidence" value="ECO:0007669"/>
    <property type="project" value="UniProtKB-SubCell"/>
</dbReference>
<dbReference type="GO" id="GO:0004719">
    <property type="term" value="F:protein-L-isoaspartate (D-aspartate) O-methyltransferase activity"/>
    <property type="evidence" value="ECO:0007669"/>
    <property type="project" value="UniProtKB-UniRule"/>
</dbReference>
<dbReference type="GO" id="GO:0032259">
    <property type="term" value="P:methylation"/>
    <property type="evidence" value="ECO:0007669"/>
    <property type="project" value="UniProtKB-KW"/>
</dbReference>
<dbReference type="GO" id="GO:0036211">
    <property type="term" value="P:protein modification process"/>
    <property type="evidence" value="ECO:0007669"/>
    <property type="project" value="UniProtKB-UniRule"/>
</dbReference>
<dbReference type="GO" id="GO:0030091">
    <property type="term" value="P:protein repair"/>
    <property type="evidence" value="ECO:0007669"/>
    <property type="project" value="UniProtKB-UniRule"/>
</dbReference>
<dbReference type="CDD" id="cd02440">
    <property type="entry name" value="AdoMet_MTases"/>
    <property type="match status" value="1"/>
</dbReference>
<dbReference type="FunFam" id="3.40.50.150:FF:000010">
    <property type="entry name" value="Protein-L-isoaspartate O-methyltransferase"/>
    <property type="match status" value="1"/>
</dbReference>
<dbReference type="Gene3D" id="3.40.50.150">
    <property type="entry name" value="Vaccinia Virus protein VP39"/>
    <property type="match status" value="1"/>
</dbReference>
<dbReference type="HAMAP" id="MF_00090">
    <property type="entry name" value="PIMT"/>
    <property type="match status" value="1"/>
</dbReference>
<dbReference type="InterPro" id="IPR000682">
    <property type="entry name" value="PCMT"/>
</dbReference>
<dbReference type="InterPro" id="IPR029063">
    <property type="entry name" value="SAM-dependent_MTases_sf"/>
</dbReference>
<dbReference type="NCBIfam" id="TIGR00080">
    <property type="entry name" value="pimt"/>
    <property type="match status" value="1"/>
</dbReference>
<dbReference type="NCBIfam" id="NF001453">
    <property type="entry name" value="PRK00312.1"/>
    <property type="match status" value="1"/>
</dbReference>
<dbReference type="PANTHER" id="PTHR11579">
    <property type="entry name" value="PROTEIN-L-ISOASPARTATE O-METHYLTRANSFERASE"/>
    <property type="match status" value="1"/>
</dbReference>
<dbReference type="PANTHER" id="PTHR11579:SF0">
    <property type="entry name" value="PROTEIN-L-ISOASPARTATE(D-ASPARTATE) O-METHYLTRANSFERASE"/>
    <property type="match status" value="1"/>
</dbReference>
<dbReference type="Pfam" id="PF01135">
    <property type="entry name" value="PCMT"/>
    <property type="match status" value="1"/>
</dbReference>
<dbReference type="SUPFAM" id="SSF53335">
    <property type="entry name" value="S-adenosyl-L-methionine-dependent methyltransferases"/>
    <property type="match status" value="1"/>
</dbReference>
<dbReference type="PROSITE" id="PS01279">
    <property type="entry name" value="PCMT"/>
    <property type="match status" value="1"/>
</dbReference>
<name>PIMT_SHEB2</name>
<accession>B8E8T7</accession>
<sequence>MTRVALTSAVNLAKKLHDAGIRNQAVLKAISHTPREMFLDNALAHKAYENTALPIGQGQTISQPYIVARMTELLLHKMPQRVLEVGTGSGYQAAILAQLVPQLCTIERIKGLQIQARQRLKRLDLHNVSFKYGDGWLGWANRSPFDAIMVTAAASTIPEALLSQLAEGGVLVLPVGEDTQQLMRITRTADRFSSETIETVKFVPLINGELA</sequence>
<feature type="chain" id="PRO_1000192399" description="Protein-L-isoaspartate O-methyltransferase">
    <location>
        <begin position="1"/>
        <end position="211"/>
    </location>
</feature>
<feature type="active site" evidence="1">
    <location>
        <position position="62"/>
    </location>
</feature>
<protein>
    <recommendedName>
        <fullName evidence="1">Protein-L-isoaspartate O-methyltransferase</fullName>
        <ecNumber evidence="1">2.1.1.77</ecNumber>
    </recommendedName>
    <alternativeName>
        <fullName evidence="1">L-isoaspartyl protein carboxyl methyltransferase</fullName>
    </alternativeName>
    <alternativeName>
        <fullName evidence="1">Protein L-isoaspartyl methyltransferase</fullName>
    </alternativeName>
    <alternativeName>
        <fullName evidence="1">Protein-beta-aspartate methyltransferase</fullName>
        <shortName evidence="1">PIMT</shortName>
    </alternativeName>
</protein>